<gene>
    <name type="primary">Ap2b1</name>
    <name type="synonym">Clapb1</name>
</gene>
<comment type="function">
    <text evidence="1 5 6 7">Component of the adaptor protein complex 2 (AP-2). Adaptor protein complexes function in protein transport via transport vesicles in different membrane traffic pathways. Adaptor protein complexes are vesicle coat components and appear to be involved in cargo selection and vesicle formation. AP-2 is involved in clathrin-dependent endocytosis in which cargo proteins are incorporated into vesicles surrounded by clathrin (clathrin-coated vesicles, CCVs) which are destined for fusion with the early endosome. The clathrin lattice serves as a mechanical scaffold but is itself unable to bind directly to membrane components. Clathrin-associated adaptor protein (AP) complexes which can bind directly to both the clathrin lattice and to the lipid and protein components of membranes are considered to be the major clathrin adaptors contributing the CCV formation. AP-2 also serves as a cargo receptor to selectively sort the membrane proteins involved in receptor-mediated endocytosis. AP-2 seems to play a role in the recycling of synaptic vesicle membranes from the presynaptic surface. AP-2 recognizes Y-X-X-[FILMV] (Y-X-X-Phi) and [ED]-X-X-X-L-[LI] endocytosis signal motifs within the cytosolic tails of transmembrane cargo molecules. AP-2 may also play a role in maintaining normal post-endocytic trafficking through the ARF6-regulated, non-clathrin pathway. During long-term potentiation in hippocampal neurons, AP-2 is responsible for the endocytosis of ADAM10 (PubMed:23676497). The AP-2 beta subunit acts via its C-terminal appendage domain as a scaffolding platform for endocytic accessory proteins; at least some clathrin-associated sorting proteins (CLASPs) are recognized by their [DE]-X(1,2)-F-X-X-[FL]-X-X-X-R motif. The AP-2 beta subunit binds to clathrin heavy chain, promoting clathrin lattice assembly; clathrin displaces at least some CLASPs from AP2B1 which probably then can be positioned for further coat assembly (By similarity).</text>
</comment>
<comment type="subunit">
    <text evidence="2 3 7 8">Adaptor protein complex 2 (AP-2) is a heterotetramer composed of two large adaptins (alpha-type subunit AP2A1 or AP2A2 and beta-type subunit AP2B1), a medium adaptin (mu-type subunit AP2M1) and a small adaptin (sigma-type subunit AP2S1) (By similarity). Interacts with EPN1 (By similarity). Interacts with EPS15; clathrin competes with EPS15 (By similarity). Interacts with SNAP91; clathrin competes with SNAP91 (By similarity). Interacts with CLTC; clathrin competes with EPS15, SNAP91 and PIP5K1C (By similarity). Interacts with LDLRAP1 (By similarity). Interacts with AMPH and BIN1 (By similarity). Interacts with ARF6 (GDP-bound) (By similarity). Interacts (dephosphorylated at Tyr-737) with ARRB1; phosphorylation of AP2B1 at Tyr-737 disrupts the interaction (By similarity). Interacts with SLC2A8 (By similarity). Interacts with SCYL1 and SCYL2. Interacts with TGFBR1 and TGFBR2 (By similarity). Interacts with PIP5K1C; clathrin competes with PIP5K1C (By similarity). Interacts with DENND1B (By similarity). Interacts with FCHO1 (By similarity). Interacts with RFTN1 (By similarity). Interacts with KIAA1107 (PubMed:29262337). Together with AP2A1 or AP2A2 and AP2M1, it interacts with ADAM10; this interaction facilitates ADAM10 endocytosis from the plasma membrane during long-term potentiation in hippocampal neurons (PubMed:23676497).</text>
</comment>
<comment type="interaction">
    <interactant intactId="EBI-775229">
        <id>Q9DBG3</id>
    </interactant>
    <interactant intactId="EBI-2899393">
        <id>Q64729</id>
        <label>Tgfbr1</label>
    </interactant>
    <organismsDiffer>false</organismsDiffer>
    <experiments>2</experiments>
</comment>
<comment type="interaction">
    <interactant intactId="EBI-775229">
        <id>Q9DBG3</id>
    </interactant>
    <interactant intactId="EBI-495538">
        <id>P48023</id>
        <label>FASLG</label>
    </interactant>
    <organismsDiffer>true</organismsDiffer>
    <experiments>2</experiments>
</comment>
<comment type="interaction">
    <interactant intactId="EBI-775239">
        <id>Q9DBG3-1</id>
    </interactant>
    <interactant intactId="EBI-773657">
        <id>O70161</id>
        <label>Pip5k1c</label>
    </interactant>
    <organismsDiffer>false</organismsDiffer>
    <experiments>3</experiments>
</comment>
<comment type="interaction">
    <interactant intactId="EBI-7257021">
        <id>Q9DBG3-2</id>
    </interactant>
    <interactant intactId="EBI-773657">
        <id>O70161</id>
        <label>Pip5k1c</label>
    </interactant>
    <organismsDiffer>false</organismsDiffer>
    <experiments>8</experiments>
</comment>
<comment type="subcellular location">
    <subcellularLocation>
        <location evidence="1">Cell membrane</location>
    </subcellularLocation>
    <subcellularLocation>
        <location evidence="1">Membrane</location>
        <location evidence="1">Coated pit</location>
        <topology evidence="1">Peripheral membrane protein</topology>
        <orientation evidence="1">Cytoplasmic side</orientation>
    </subcellularLocation>
    <text evidence="1">AP-2 appears to be excluded from internalizing CCVs and to disengage from sites of endocytosis seconds before internalization of the nascent CCV.</text>
</comment>
<comment type="alternative products">
    <event type="alternative splicing"/>
    <isoform>
        <id>Q9DBG3-1</id>
        <name>1</name>
        <sequence type="displayed"/>
    </isoform>
    <isoform>
        <id>Q9DBG3-2</id>
        <name>2</name>
        <sequence type="described" ref="VSP_011491"/>
    </isoform>
</comment>
<comment type="tissue specificity">
    <text evidence="7">Expressed in the brain (at protein level).</text>
</comment>
<comment type="similarity">
    <text evidence="10">Belongs to the adaptor complexes large subunit family.</text>
</comment>
<name>AP2B1_MOUSE</name>
<organism>
    <name type="scientific">Mus musculus</name>
    <name type="common">Mouse</name>
    <dbReference type="NCBI Taxonomy" id="10090"/>
    <lineage>
        <taxon>Eukaryota</taxon>
        <taxon>Metazoa</taxon>
        <taxon>Chordata</taxon>
        <taxon>Craniata</taxon>
        <taxon>Vertebrata</taxon>
        <taxon>Euteleostomi</taxon>
        <taxon>Mammalia</taxon>
        <taxon>Eutheria</taxon>
        <taxon>Euarchontoglires</taxon>
        <taxon>Glires</taxon>
        <taxon>Rodentia</taxon>
        <taxon>Myomorpha</taxon>
        <taxon>Muroidea</taxon>
        <taxon>Muridae</taxon>
        <taxon>Murinae</taxon>
        <taxon>Mus</taxon>
        <taxon>Mus</taxon>
    </lineage>
</organism>
<protein>
    <recommendedName>
        <fullName>AP-2 complex subunit beta</fullName>
    </recommendedName>
    <alternativeName>
        <fullName>AP105B</fullName>
    </alternativeName>
    <alternativeName>
        <fullName>Adaptor protein complex AP-2 subunit beta</fullName>
    </alternativeName>
    <alternativeName>
        <fullName>Adaptor-related protein complex 2 subunit beta</fullName>
    </alternativeName>
    <alternativeName>
        <fullName>Beta-2-adaptin</fullName>
    </alternativeName>
    <alternativeName>
        <fullName>Beta-adaptin</fullName>
    </alternativeName>
    <alternativeName>
        <fullName>Clathrin assembly protein complex 2 beta large chain</fullName>
    </alternativeName>
    <alternativeName>
        <fullName>Plasma membrane adaptor HA2/AP2 adaptin beta subunit</fullName>
    </alternativeName>
</protein>
<dbReference type="EMBL" id="AK004975">
    <property type="protein sequence ID" value="BAB23711.1"/>
    <property type="molecule type" value="mRNA"/>
</dbReference>
<dbReference type="EMBL" id="BC046772">
    <property type="protein sequence ID" value="AAH46772.1"/>
    <property type="molecule type" value="mRNA"/>
</dbReference>
<dbReference type="CCDS" id="CCDS25161.1">
    <molecule id="Q9DBG3-2"/>
</dbReference>
<dbReference type="CCDS" id="CCDS25162.1">
    <molecule id="Q9DBG3-1"/>
</dbReference>
<dbReference type="RefSeq" id="NP_001030931.1">
    <molecule id="Q9DBG3-2"/>
    <property type="nucleotide sequence ID" value="NM_001035854.2"/>
</dbReference>
<dbReference type="RefSeq" id="NP_082191.1">
    <molecule id="Q9DBG3-1"/>
    <property type="nucleotide sequence ID" value="NM_027915.3"/>
</dbReference>
<dbReference type="RefSeq" id="XP_006534321.1">
    <molecule id="Q9DBG3-2"/>
    <property type="nucleotide sequence ID" value="XM_006534258.5"/>
</dbReference>
<dbReference type="RefSeq" id="XP_017170261.1">
    <molecule id="Q9DBG3-2"/>
    <property type="nucleotide sequence ID" value="XM_017314772.3"/>
</dbReference>
<dbReference type="RefSeq" id="XP_036012889.1">
    <molecule id="Q9DBG3-2"/>
    <property type="nucleotide sequence ID" value="XM_036156996.1"/>
</dbReference>
<dbReference type="PDB" id="6OWO">
    <property type="method" value="EM"/>
    <property type="resolution" value="3.20 A"/>
    <property type="chains" value="B=1-591"/>
</dbReference>
<dbReference type="PDB" id="6OXL">
    <property type="method" value="EM"/>
    <property type="resolution" value="3.50 A"/>
    <property type="chains" value="B=1-591"/>
</dbReference>
<dbReference type="PDB" id="7RW8">
    <property type="method" value="EM"/>
    <property type="resolution" value="3.50 A"/>
    <property type="chains" value="B=1-591"/>
</dbReference>
<dbReference type="PDB" id="7RW9">
    <property type="method" value="EM"/>
    <property type="resolution" value="3.90 A"/>
    <property type="chains" value="B=1-591"/>
</dbReference>
<dbReference type="PDB" id="7RWA">
    <property type="method" value="EM"/>
    <property type="resolution" value="4.70 A"/>
    <property type="chains" value="B/b=1-591"/>
</dbReference>
<dbReference type="PDB" id="7RWB">
    <property type="method" value="EM"/>
    <property type="resolution" value="3.90 A"/>
    <property type="chains" value="B/b=1-591"/>
</dbReference>
<dbReference type="PDB" id="7RWC">
    <property type="method" value="EM"/>
    <property type="resolution" value="3.80 A"/>
    <property type="chains" value="B=1-591"/>
</dbReference>
<dbReference type="PDB" id="8T1O">
    <property type="method" value="EM"/>
    <property type="resolution" value="3.30 A"/>
    <property type="chains" value="B=1-591"/>
</dbReference>
<dbReference type="PDBsum" id="6OWO"/>
<dbReference type="PDBsum" id="6OXL"/>
<dbReference type="PDBsum" id="7RW8"/>
<dbReference type="PDBsum" id="7RW9"/>
<dbReference type="PDBsum" id="7RWA"/>
<dbReference type="PDBsum" id="7RWB"/>
<dbReference type="PDBsum" id="7RWC"/>
<dbReference type="PDBsum" id="8T1O"/>
<dbReference type="EMDB" id="EMD-16803"/>
<dbReference type="EMDB" id="EMD-16804"/>
<dbReference type="EMDB" id="EMD-20215"/>
<dbReference type="EMDB" id="EMD-20220"/>
<dbReference type="EMDB" id="EMD-24710"/>
<dbReference type="EMDB" id="EMD-24711"/>
<dbReference type="EMDB" id="EMD-24712"/>
<dbReference type="EMDB" id="EMD-24713"/>
<dbReference type="EMDB" id="EMD-24714"/>
<dbReference type="EMDB" id="EMD-29977"/>
<dbReference type="EMDB" id="EMD-40034"/>
<dbReference type="EMDB" id="EMD-40035"/>
<dbReference type="EMDB" id="EMD-40973"/>
<dbReference type="SMR" id="Q9DBG3"/>
<dbReference type="BioGRID" id="214914">
    <property type="interactions" value="53"/>
</dbReference>
<dbReference type="ComplexPortal" id="CPX-5152">
    <property type="entry name" value="AP-2 Adaptor complex, alpha1 variant"/>
</dbReference>
<dbReference type="ComplexPortal" id="CPX-5153">
    <property type="entry name" value="AP-2 Adaptor complex, alpha2 variant"/>
</dbReference>
<dbReference type="DIP" id="DIP-32161N"/>
<dbReference type="FunCoup" id="Q9DBG3">
    <property type="interactions" value="2740"/>
</dbReference>
<dbReference type="IntAct" id="Q9DBG3">
    <property type="interactions" value="13"/>
</dbReference>
<dbReference type="MINT" id="Q9DBG3"/>
<dbReference type="STRING" id="10090.ENSMUSP00000018875"/>
<dbReference type="GlyGen" id="Q9DBG3">
    <property type="glycosylation" value="5 sites, 1 N-linked glycan (1 site), 1 O-linked glycan (3 sites)"/>
</dbReference>
<dbReference type="iPTMnet" id="Q9DBG3"/>
<dbReference type="PhosphoSitePlus" id="Q9DBG3"/>
<dbReference type="SwissPalm" id="Q9DBG3"/>
<dbReference type="jPOST" id="Q9DBG3"/>
<dbReference type="PaxDb" id="10090-ENSMUSP00000018875"/>
<dbReference type="ProteomicsDB" id="296208">
    <molecule id="Q9DBG3-1"/>
</dbReference>
<dbReference type="ProteomicsDB" id="296209">
    <molecule id="Q9DBG3-2"/>
</dbReference>
<dbReference type="Pumba" id="Q9DBG3"/>
<dbReference type="Antibodypedia" id="4320">
    <property type="antibodies" value="272 antibodies from 30 providers"/>
</dbReference>
<dbReference type="DNASU" id="71770"/>
<dbReference type="Ensembl" id="ENSMUST00000018875.13">
    <molecule id="Q9DBG3-2"/>
    <property type="protein sequence ID" value="ENSMUSP00000018875.7"/>
    <property type="gene ID" value="ENSMUSG00000035152.15"/>
</dbReference>
<dbReference type="Ensembl" id="ENSMUST00000065692.14">
    <molecule id="Q9DBG3-1"/>
    <property type="protein sequence ID" value="ENSMUSP00000070714.8"/>
    <property type="gene ID" value="ENSMUSG00000035152.15"/>
</dbReference>
<dbReference type="GeneID" id="71770"/>
<dbReference type="KEGG" id="mmu:71770"/>
<dbReference type="UCSC" id="uc007kor.1">
    <molecule id="Q9DBG3-1"/>
    <property type="organism name" value="mouse"/>
</dbReference>
<dbReference type="AGR" id="MGI:1919020"/>
<dbReference type="CTD" id="163"/>
<dbReference type="MGI" id="MGI:1919020">
    <property type="gene designation" value="Ap2b1"/>
</dbReference>
<dbReference type="VEuPathDB" id="HostDB:ENSMUSG00000035152"/>
<dbReference type="eggNOG" id="KOG1061">
    <property type="taxonomic scope" value="Eukaryota"/>
</dbReference>
<dbReference type="GeneTree" id="ENSGT00940000155206"/>
<dbReference type="HOGENOM" id="CLU_006320_1_1_1"/>
<dbReference type="InParanoid" id="Q9DBG3"/>
<dbReference type="OMA" id="PECNEWG"/>
<dbReference type="OrthoDB" id="10254310at2759"/>
<dbReference type="TreeFam" id="TF300318"/>
<dbReference type="Reactome" id="R-MMU-177504">
    <property type="pathway name" value="Retrograde neurotrophin signalling"/>
</dbReference>
<dbReference type="Reactome" id="R-MMU-2132295">
    <property type="pathway name" value="MHC class II antigen presentation"/>
</dbReference>
<dbReference type="Reactome" id="R-MMU-416993">
    <property type="pathway name" value="Trafficking of GluR2-containing AMPA receptors"/>
</dbReference>
<dbReference type="Reactome" id="R-MMU-437239">
    <property type="pathway name" value="Recycling pathway of L1"/>
</dbReference>
<dbReference type="Reactome" id="R-MMU-5099900">
    <property type="pathway name" value="WNT5A-dependent internalization of FZD4"/>
</dbReference>
<dbReference type="Reactome" id="R-MMU-5140745">
    <property type="pathway name" value="WNT5A-dependent internalization of FZD2, FZD5 and ROR2"/>
</dbReference>
<dbReference type="Reactome" id="R-MMU-8856825">
    <property type="pathway name" value="Cargo recognition for clathrin-mediated endocytosis"/>
</dbReference>
<dbReference type="Reactome" id="R-MMU-8856828">
    <property type="pathway name" value="Clathrin-mediated endocytosis"/>
</dbReference>
<dbReference type="Reactome" id="R-MMU-8866427">
    <property type="pathway name" value="VLDLR internalisation and degradation"/>
</dbReference>
<dbReference type="Reactome" id="R-MMU-8964038">
    <property type="pathway name" value="LDL clearance"/>
</dbReference>
<dbReference type="BioGRID-ORCS" id="71770">
    <property type="hits" value="5 hits in 79 CRISPR screens"/>
</dbReference>
<dbReference type="CD-CODE" id="CE726F99">
    <property type="entry name" value="Postsynaptic density"/>
</dbReference>
<dbReference type="ChiTaRS" id="Ap2b1">
    <property type="organism name" value="mouse"/>
</dbReference>
<dbReference type="PRO" id="PR:Q9DBG3"/>
<dbReference type="Proteomes" id="UP000000589">
    <property type="component" value="Chromosome 11"/>
</dbReference>
<dbReference type="RNAct" id="Q9DBG3">
    <property type="molecule type" value="protein"/>
</dbReference>
<dbReference type="Bgee" id="ENSMUSG00000035152">
    <property type="expression patterns" value="Expressed in spermatid and 264 other cell types or tissues"/>
</dbReference>
<dbReference type="ExpressionAtlas" id="Q9DBG3">
    <property type="expression patterns" value="baseline and differential"/>
</dbReference>
<dbReference type="GO" id="GO:0030122">
    <property type="term" value="C:AP-2 adaptor complex"/>
    <property type="evidence" value="ECO:0000314"/>
    <property type="project" value="UniProtKB"/>
</dbReference>
<dbReference type="GO" id="GO:0030131">
    <property type="term" value="C:clathrin adaptor complex"/>
    <property type="evidence" value="ECO:0000266"/>
    <property type="project" value="MGI"/>
</dbReference>
<dbReference type="GO" id="GO:0009898">
    <property type="term" value="C:cytoplasmic side of plasma membrane"/>
    <property type="evidence" value="ECO:0000303"/>
    <property type="project" value="ComplexPortal"/>
</dbReference>
<dbReference type="GO" id="GO:0098894">
    <property type="term" value="C:extrinsic component of presynaptic endocytic zone membrane"/>
    <property type="evidence" value="ECO:0007669"/>
    <property type="project" value="Ensembl"/>
</dbReference>
<dbReference type="GO" id="GO:0098978">
    <property type="term" value="C:glutamatergic synapse"/>
    <property type="evidence" value="ECO:0000314"/>
    <property type="project" value="SynGO"/>
</dbReference>
<dbReference type="GO" id="GO:0098843">
    <property type="term" value="C:postsynaptic endocytic zone"/>
    <property type="evidence" value="ECO:0007669"/>
    <property type="project" value="Ensembl"/>
</dbReference>
<dbReference type="GO" id="GO:0045202">
    <property type="term" value="C:synapse"/>
    <property type="evidence" value="ECO:0000314"/>
    <property type="project" value="SynGO"/>
</dbReference>
<dbReference type="GO" id="GO:0008021">
    <property type="term" value="C:synaptic vesicle"/>
    <property type="evidence" value="ECO:0007669"/>
    <property type="project" value="Ensembl"/>
</dbReference>
<dbReference type="GO" id="GO:0030276">
    <property type="term" value="F:clathrin binding"/>
    <property type="evidence" value="ECO:0000266"/>
    <property type="project" value="MGI"/>
</dbReference>
<dbReference type="GO" id="GO:0044877">
    <property type="term" value="F:protein-containing complex binding"/>
    <property type="evidence" value="ECO:0007669"/>
    <property type="project" value="Ensembl"/>
</dbReference>
<dbReference type="GO" id="GO:0035904">
    <property type="term" value="P:aorta development"/>
    <property type="evidence" value="ECO:0000315"/>
    <property type="project" value="MGI"/>
</dbReference>
<dbReference type="GO" id="GO:0003279">
    <property type="term" value="P:cardiac septum development"/>
    <property type="evidence" value="ECO:0000315"/>
    <property type="project" value="MGI"/>
</dbReference>
<dbReference type="GO" id="GO:0048268">
    <property type="term" value="P:clathrin coat assembly"/>
    <property type="evidence" value="ECO:0007669"/>
    <property type="project" value="Ensembl"/>
</dbReference>
<dbReference type="GO" id="GO:0072583">
    <property type="term" value="P:clathrin-dependent endocytosis"/>
    <property type="evidence" value="ECO:0000314"/>
    <property type="project" value="UniProtKB"/>
</dbReference>
<dbReference type="GO" id="GO:0060976">
    <property type="term" value="P:coronary vasculature development"/>
    <property type="evidence" value="ECO:0000315"/>
    <property type="project" value="MGI"/>
</dbReference>
<dbReference type="GO" id="GO:0007507">
    <property type="term" value="P:heart development"/>
    <property type="evidence" value="ECO:0000315"/>
    <property type="project" value="MGI"/>
</dbReference>
<dbReference type="GO" id="GO:0006886">
    <property type="term" value="P:intracellular protein transport"/>
    <property type="evidence" value="ECO:0007669"/>
    <property type="project" value="InterPro"/>
</dbReference>
<dbReference type="GO" id="GO:0001822">
    <property type="term" value="P:kidney development"/>
    <property type="evidence" value="ECO:0000315"/>
    <property type="project" value="MGI"/>
</dbReference>
<dbReference type="GO" id="GO:0007269">
    <property type="term" value="P:neurotransmitter secretion"/>
    <property type="evidence" value="ECO:0007669"/>
    <property type="project" value="Ensembl"/>
</dbReference>
<dbReference type="GO" id="GO:0045807">
    <property type="term" value="P:positive regulation of endocytosis"/>
    <property type="evidence" value="ECO:0007669"/>
    <property type="project" value="Ensembl"/>
</dbReference>
<dbReference type="GO" id="GO:1905477">
    <property type="term" value="P:positive regulation of protein localization to membrane"/>
    <property type="evidence" value="ECO:0007669"/>
    <property type="project" value="Ensembl"/>
</dbReference>
<dbReference type="GO" id="GO:0098884">
    <property type="term" value="P:postsynaptic neurotransmitter receptor internalization"/>
    <property type="evidence" value="ECO:0000314"/>
    <property type="project" value="SynGO"/>
</dbReference>
<dbReference type="GO" id="GO:0048488">
    <property type="term" value="P:synaptic vesicle endocytosis"/>
    <property type="evidence" value="ECO:0007669"/>
    <property type="project" value="Ensembl"/>
</dbReference>
<dbReference type="GO" id="GO:0003281">
    <property type="term" value="P:ventricular septum development"/>
    <property type="evidence" value="ECO:0000315"/>
    <property type="project" value="MGI"/>
</dbReference>
<dbReference type="GO" id="GO:0016192">
    <property type="term" value="P:vesicle-mediated transport"/>
    <property type="evidence" value="ECO:0000303"/>
    <property type="project" value="ComplexPortal"/>
</dbReference>
<dbReference type="FunFam" id="1.25.10.10:FF:000002">
    <property type="entry name" value="AP complex subunit beta"/>
    <property type="match status" value="1"/>
</dbReference>
<dbReference type="FunFam" id="2.60.40.1150:FF:000001">
    <property type="entry name" value="AP complex subunit beta"/>
    <property type="match status" value="1"/>
</dbReference>
<dbReference type="FunFam" id="3.30.310.10:FF:000003">
    <property type="entry name" value="AP complex subunit beta"/>
    <property type="match status" value="1"/>
</dbReference>
<dbReference type="Gene3D" id="2.60.40.1150">
    <property type="match status" value="1"/>
</dbReference>
<dbReference type="Gene3D" id="1.25.10.10">
    <property type="entry name" value="Leucine-rich Repeat Variant"/>
    <property type="match status" value="1"/>
</dbReference>
<dbReference type="Gene3D" id="3.30.310.10">
    <property type="entry name" value="TATA-Binding Protein"/>
    <property type="match status" value="1"/>
</dbReference>
<dbReference type="InterPro" id="IPR026739">
    <property type="entry name" value="AP_beta"/>
</dbReference>
<dbReference type="InterPro" id="IPR016342">
    <property type="entry name" value="AP_complex_bsu_1_2_4"/>
</dbReference>
<dbReference type="InterPro" id="IPR011989">
    <property type="entry name" value="ARM-like"/>
</dbReference>
<dbReference type="InterPro" id="IPR016024">
    <property type="entry name" value="ARM-type_fold"/>
</dbReference>
<dbReference type="InterPro" id="IPR000225">
    <property type="entry name" value="Armadillo"/>
</dbReference>
<dbReference type="InterPro" id="IPR015151">
    <property type="entry name" value="B-adaptin_app_sub_C"/>
</dbReference>
<dbReference type="InterPro" id="IPR002553">
    <property type="entry name" value="Clathrin/coatomer_adapt-like_N"/>
</dbReference>
<dbReference type="InterPro" id="IPR008152">
    <property type="entry name" value="Clathrin_a/b/g-adaptin_app_Ig"/>
</dbReference>
<dbReference type="InterPro" id="IPR013041">
    <property type="entry name" value="Clathrin_app_Ig-like_sf"/>
</dbReference>
<dbReference type="InterPro" id="IPR013037">
    <property type="entry name" value="Clathrin_b-adaptin_app_Ig-like"/>
</dbReference>
<dbReference type="InterPro" id="IPR009028">
    <property type="entry name" value="Coatomer/calthrin_app_sub_C"/>
</dbReference>
<dbReference type="InterPro" id="IPR012295">
    <property type="entry name" value="TBP_dom_sf"/>
</dbReference>
<dbReference type="PANTHER" id="PTHR11134">
    <property type="entry name" value="ADAPTOR COMPLEX SUBUNIT BETA FAMILY MEMBER"/>
    <property type="match status" value="1"/>
</dbReference>
<dbReference type="Pfam" id="PF01602">
    <property type="entry name" value="Adaptin_N"/>
    <property type="match status" value="1"/>
</dbReference>
<dbReference type="Pfam" id="PF02883">
    <property type="entry name" value="Alpha_adaptinC2"/>
    <property type="match status" value="1"/>
</dbReference>
<dbReference type="Pfam" id="PF09066">
    <property type="entry name" value="B2-adapt-app_C"/>
    <property type="match status" value="1"/>
</dbReference>
<dbReference type="PIRSF" id="PIRSF002291">
    <property type="entry name" value="AP_complex_beta"/>
    <property type="match status" value="1"/>
</dbReference>
<dbReference type="SMART" id="SM00809">
    <property type="entry name" value="Alpha_adaptinC2"/>
    <property type="match status" value="1"/>
</dbReference>
<dbReference type="SMART" id="SM00185">
    <property type="entry name" value="ARM"/>
    <property type="match status" value="2"/>
</dbReference>
<dbReference type="SMART" id="SM01020">
    <property type="entry name" value="B2-adapt-app_C"/>
    <property type="match status" value="1"/>
</dbReference>
<dbReference type="SUPFAM" id="SSF48371">
    <property type="entry name" value="ARM repeat"/>
    <property type="match status" value="1"/>
</dbReference>
<dbReference type="SUPFAM" id="SSF49348">
    <property type="entry name" value="Clathrin adaptor appendage domain"/>
    <property type="match status" value="1"/>
</dbReference>
<dbReference type="SUPFAM" id="SSF55711">
    <property type="entry name" value="Subdomain of clathrin and coatomer appendage domain"/>
    <property type="match status" value="1"/>
</dbReference>
<accession>Q9DBG3</accession>
<accession>Q80XJ4</accession>
<sequence>MTDSKYFTTNKKGEIFELKAELNNEKKEKRKEAVKKVIAAMTVGKDVSSLFPDVVNCMQTDNLELKKLVYLYLMNYAKSQPDMAIMAVNSFVKDCEDPNPLIRALAVRTMGCIRVDKITEYLCEPLRKCLKDEDPYVRKTAAVCVAKLHDINAQMVEDQGFLDSLRDLIADSNPMVVANAVAALSEISESHPNSNLLDLNPQNINKLLTALNECTEWGQIFILDCLSNYNPKDDREAQSICERVTPRLSHANSAVVLSAVKVLMKFLELLPKDSDYYNMLLKKLAPPLVTLLSGEPEVQYVALRNINLIVQKRPEILKQEIKVFFVKYNDPIYVKLEKLDIMIRLASQANIAQVLAELKEYATEVDVDFVRKAVRAIGRCAIKVEQSAERCVSTLLDLIQTKVNYVVQEAIVVIRDIFRKYPNKYESIIATLCENLDSLDEPDARAAMIWIVGEYAERIDNADELLESFLEGFHDESTQVQLTLLTAIVKLFLKKPSETQELVQQVLSLATQDSDNPDLRDRGYIYWRLLSTDPVTAKEVVLSEKPLISEETDLIEPTLLDELICHIGSLASVYHKPPNAFVEGSHGIHRKHLPIHHGSTDAGDSPVGTTTTTNLEQPQVIPSQGDLLGDLLNLDLGPPVNVPQVSSMQMGAVDLLGGGLDSLVGQSFIPSSVPATFAPSPTPAVVSSGLNDLFELSTGIGMAPGGYVAPKAVWLPAVKAKGLEISGTFTHRQGHIYMEMNFTNKALQHMTDFAIQFNKNSFGVIPSTPLAIHTPLMPNQSIDVSLPLNTLGPVMKMEPLNNLQVAVKNNIDVFYFSCLIPLNVLFVEDGKMERQVFLATWKDIPNENELQFQIKECHLNADTVSSKLQNNNVYTIAKRNVEGQDMLYQSLKLTNGIWILAELRIQPGNPNYTLSLKCRAPEVSQYIYQVYDSILKN</sequence>
<keyword id="KW-0002">3D-structure</keyword>
<keyword id="KW-0007">Acetylation</keyword>
<keyword id="KW-0025">Alternative splicing</keyword>
<keyword id="KW-1003">Cell membrane</keyword>
<keyword id="KW-0168">Coated pit</keyword>
<keyword id="KW-0254">Endocytosis</keyword>
<keyword id="KW-0472">Membrane</keyword>
<keyword id="KW-0597">Phosphoprotein</keyword>
<keyword id="KW-0653">Protein transport</keyword>
<keyword id="KW-1185">Reference proteome</keyword>
<keyword id="KW-0813">Transport</keyword>
<feature type="initiator methionine" description="Removed" evidence="3">
    <location>
        <position position="1"/>
    </location>
</feature>
<feature type="chain" id="PRO_0000193743" description="AP-2 complex subunit beta">
    <location>
        <begin position="2"/>
        <end position="937"/>
    </location>
</feature>
<feature type="region of interest" description="Disordered" evidence="4">
    <location>
        <begin position="593"/>
        <end position="617"/>
    </location>
</feature>
<feature type="compositionally biased region" description="Polar residues" evidence="4">
    <location>
        <begin position="607"/>
        <end position="617"/>
    </location>
</feature>
<feature type="modified residue" description="N-acetylthreonine" evidence="3">
    <location>
        <position position="2"/>
    </location>
</feature>
<feature type="modified residue" description="Phosphoserine" evidence="3">
    <location>
        <position position="4"/>
    </location>
</feature>
<feature type="modified residue" description="N6-acetyllysine" evidence="3">
    <location>
        <position position="265"/>
    </location>
</feature>
<feature type="modified residue" description="Phosphotyrosine" evidence="3">
    <location>
        <position position="737"/>
    </location>
</feature>
<feature type="modified residue" description="Phosphotyrosine" evidence="2">
    <location>
        <position position="928"/>
    </location>
</feature>
<feature type="splice variant" id="VSP_011491" description="In isoform 2." evidence="9">
    <original>L</original>
    <variation>LLGSDLGGGIGGSPA</variation>
    <location>
        <position position="663"/>
    </location>
</feature>
<feature type="strand" evidence="11">
    <location>
        <begin position="10"/>
        <end position="13"/>
    </location>
</feature>
<feature type="helix" evidence="11">
    <location>
        <begin position="14"/>
        <end position="22"/>
    </location>
</feature>
<feature type="turn" evidence="11">
    <location>
        <begin position="28"/>
        <end position="30"/>
    </location>
</feature>
<feature type="helix" evidence="11">
    <location>
        <begin position="31"/>
        <end position="43"/>
    </location>
</feature>
<feature type="helix" evidence="11">
    <location>
        <begin position="48"/>
        <end position="50"/>
    </location>
</feature>
<feature type="helix" evidence="11">
    <location>
        <begin position="51"/>
        <end position="54"/>
    </location>
</feature>
<feature type="helix" evidence="11">
    <location>
        <begin position="55"/>
        <end position="57"/>
    </location>
</feature>
<feature type="strand" evidence="11">
    <location>
        <begin position="58"/>
        <end position="61"/>
    </location>
</feature>
<feature type="helix" evidence="11">
    <location>
        <begin position="63"/>
        <end position="79"/>
    </location>
</feature>
<feature type="helix" evidence="11">
    <location>
        <begin position="81"/>
        <end position="84"/>
    </location>
</feature>
<feature type="helix" evidence="11">
    <location>
        <begin position="85"/>
        <end position="87"/>
    </location>
</feature>
<feature type="helix" evidence="11">
    <location>
        <begin position="88"/>
        <end position="94"/>
    </location>
</feature>
<feature type="strand" evidence="12">
    <location>
        <begin position="97"/>
        <end position="99"/>
    </location>
</feature>
<feature type="helix" evidence="11">
    <location>
        <begin position="101"/>
        <end position="111"/>
    </location>
</feature>
<feature type="helix" evidence="11">
    <location>
        <begin position="116"/>
        <end position="120"/>
    </location>
</feature>
<feature type="helix" evidence="11">
    <location>
        <begin position="125"/>
        <end position="129"/>
    </location>
</feature>
<feature type="helix" evidence="11">
    <location>
        <begin position="135"/>
        <end position="150"/>
    </location>
</feature>
<feature type="helix" evidence="11">
    <location>
        <begin position="157"/>
        <end position="169"/>
    </location>
</feature>
<feature type="helix" evidence="11">
    <location>
        <begin position="174"/>
        <end position="187"/>
    </location>
</feature>
<feature type="helix" evidence="11">
    <location>
        <begin position="200"/>
        <end position="211"/>
    </location>
</feature>
<feature type="helix" evidence="11">
    <location>
        <begin position="216"/>
        <end position="226"/>
    </location>
</feature>
<feature type="helix" evidence="11">
    <location>
        <begin position="234"/>
        <end position="244"/>
    </location>
</feature>
<feature type="helix" evidence="11">
    <location>
        <begin position="245"/>
        <end position="247"/>
    </location>
</feature>
<feature type="strand" evidence="13">
    <location>
        <begin position="249"/>
        <end position="251"/>
    </location>
</feature>
<feature type="helix" evidence="11">
    <location>
        <begin position="253"/>
        <end position="265"/>
    </location>
</feature>
<feature type="strand" evidence="13">
    <location>
        <begin position="271"/>
        <end position="273"/>
    </location>
</feature>
<feature type="helix" evidence="11">
    <location>
        <begin position="276"/>
        <end position="282"/>
    </location>
</feature>
<feature type="helix" evidence="11">
    <location>
        <begin position="285"/>
        <end position="289"/>
    </location>
</feature>
<feature type="helix" evidence="11">
    <location>
        <begin position="290"/>
        <end position="293"/>
    </location>
</feature>
<feature type="helix" evidence="11">
    <location>
        <begin position="296"/>
        <end position="312"/>
    </location>
</feature>
<feature type="strand" evidence="13">
    <location>
        <begin position="315"/>
        <end position="317"/>
    </location>
</feature>
<feature type="turn" evidence="11">
    <location>
        <begin position="321"/>
        <end position="324"/>
    </location>
</feature>
<feature type="helix" evidence="11">
    <location>
        <begin position="332"/>
        <end position="344"/>
    </location>
</feature>
<feature type="helix" evidence="11">
    <location>
        <begin position="348"/>
        <end position="350"/>
    </location>
</feature>
<feature type="helix" evidence="11">
    <location>
        <begin position="351"/>
        <end position="361"/>
    </location>
</feature>
<feature type="helix" evidence="11">
    <location>
        <begin position="367"/>
        <end position="383"/>
    </location>
</feature>
<feature type="helix" evidence="11">
    <location>
        <begin position="385"/>
        <end position="387"/>
    </location>
</feature>
<feature type="helix" evidence="11">
    <location>
        <begin position="388"/>
        <end position="399"/>
    </location>
</feature>
<feature type="helix" evidence="11">
    <location>
        <begin position="404"/>
        <end position="420"/>
    </location>
</feature>
<feature type="turn" evidence="12">
    <location>
        <begin position="422"/>
        <end position="424"/>
    </location>
</feature>
<feature type="turn" evidence="11">
    <location>
        <begin position="426"/>
        <end position="428"/>
    </location>
</feature>
<feature type="helix" evidence="11">
    <location>
        <begin position="429"/>
        <end position="432"/>
    </location>
</feature>
<feature type="helix" evidence="12">
    <location>
        <begin position="433"/>
        <end position="435"/>
    </location>
</feature>
<feature type="helix" evidence="11">
    <location>
        <begin position="436"/>
        <end position="438"/>
    </location>
</feature>
<feature type="helix" evidence="11">
    <location>
        <begin position="442"/>
        <end position="453"/>
    </location>
</feature>
<feature type="turn" evidence="11">
    <location>
        <begin position="454"/>
        <end position="458"/>
    </location>
</feature>
<feature type="helix" evidence="11">
    <location>
        <begin position="462"/>
        <end position="470"/>
    </location>
</feature>
<feature type="strand" evidence="13">
    <location>
        <begin position="474"/>
        <end position="476"/>
    </location>
</feature>
<feature type="helix" evidence="11">
    <location>
        <begin position="478"/>
        <end position="494"/>
    </location>
</feature>
<feature type="turn" evidence="11">
    <location>
        <begin position="496"/>
        <end position="498"/>
    </location>
</feature>
<feature type="helix" evidence="11">
    <location>
        <begin position="500"/>
        <end position="511"/>
    </location>
</feature>
<feature type="helix" evidence="11">
    <location>
        <begin position="517"/>
        <end position="532"/>
    </location>
</feature>
<feature type="helix" evidence="11">
    <location>
        <begin position="534"/>
        <end position="541"/>
    </location>
</feature>
<feature type="helix" evidence="11">
    <location>
        <begin position="557"/>
        <end position="564"/>
    </location>
</feature>
<feature type="strand" evidence="11">
    <location>
        <begin position="567"/>
        <end position="569"/>
    </location>
</feature>
<feature type="helix" evidence="11">
    <location>
        <begin position="570"/>
        <end position="574"/>
    </location>
</feature>
<feature type="helix" evidence="11">
    <location>
        <begin position="578"/>
        <end position="580"/>
    </location>
</feature>
<proteinExistence type="evidence at protein level"/>
<reference key="1">
    <citation type="journal article" date="2005" name="Science">
        <title>The transcriptional landscape of the mammalian genome.</title>
        <authorList>
            <person name="Carninci P."/>
            <person name="Kasukawa T."/>
            <person name="Katayama S."/>
            <person name="Gough J."/>
            <person name="Frith M.C."/>
            <person name="Maeda N."/>
            <person name="Oyama R."/>
            <person name="Ravasi T."/>
            <person name="Lenhard B."/>
            <person name="Wells C."/>
            <person name="Kodzius R."/>
            <person name="Shimokawa K."/>
            <person name="Bajic V.B."/>
            <person name="Brenner S.E."/>
            <person name="Batalov S."/>
            <person name="Forrest A.R."/>
            <person name="Zavolan M."/>
            <person name="Davis M.J."/>
            <person name="Wilming L.G."/>
            <person name="Aidinis V."/>
            <person name="Allen J.E."/>
            <person name="Ambesi-Impiombato A."/>
            <person name="Apweiler R."/>
            <person name="Aturaliya R.N."/>
            <person name="Bailey T.L."/>
            <person name="Bansal M."/>
            <person name="Baxter L."/>
            <person name="Beisel K.W."/>
            <person name="Bersano T."/>
            <person name="Bono H."/>
            <person name="Chalk A.M."/>
            <person name="Chiu K.P."/>
            <person name="Choudhary V."/>
            <person name="Christoffels A."/>
            <person name="Clutterbuck D.R."/>
            <person name="Crowe M.L."/>
            <person name="Dalla E."/>
            <person name="Dalrymple B.P."/>
            <person name="de Bono B."/>
            <person name="Della Gatta G."/>
            <person name="di Bernardo D."/>
            <person name="Down T."/>
            <person name="Engstrom P."/>
            <person name="Fagiolini M."/>
            <person name="Faulkner G."/>
            <person name="Fletcher C.F."/>
            <person name="Fukushima T."/>
            <person name="Furuno M."/>
            <person name="Futaki S."/>
            <person name="Gariboldi M."/>
            <person name="Georgii-Hemming P."/>
            <person name="Gingeras T.R."/>
            <person name="Gojobori T."/>
            <person name="Green R.E."/>
            <person name="Gustincich S."/>
            <person name="Harbers M."/>
            <person name="Hayashi Y."/>
            <person name="Hensch T.K."/>
            <person name="Hirokawa N."/>
            <person name="Hill D."/>
            <person name="Huminiecki L."/>
            <person name="Iacono M."/>
            <person name="Ikeo K."/>
            <person name="Iwama A."/>
            <person name="Ishikawa T."/>
            <person name="Jakt M."/>
            <person name="Kanapin A."/>
            <person name="Katoh M."/>
            <person name="Kawasawa Y."/>
            <person name="Kelso J."/>
            <person name="Kitamura H."/>
            <person name="Kitano H."/>
            <person name="Kollias G."/>
            <person name="Krishnan S.P."/>
            <person name="Kruger A."/>
            <person name="Kummerfeld S.K."/>
            <person name="Kurochkin I.V."/>
            <person name="Lareau L.F."/>
            <person name="Lazarevic D."/>
            <person name="Lipovich L."/>
            <person name="Liu J."/>
            <person name="Liuni S."/>
            <person name="McWilliam S."/>
            <person name="Madan Babu M."/>
            <person name="Madera M."/>
            <person name="Marchionni L."/>
            <person name="Matsuda H."/>
            <person name="Matsuzawa S."/>
            <person name="Miki H."/>
            <person name="Mignone F."/>
            <person name="Miyake S."/>
            <person name="Morris K."/>
            <person name="Mottagui-Tabar S."/>
            <person name="Mulder N."/>
            <person name="Nakano N."/>
            <person name="Nakauchi H."/>
            <person name="Ng P."/>
            <person name="Nilsson R."/>
            <person name="Nishiguchi S."/>
            <person name="Nishikawa S."/>
            <person name="Nori F."/>
            <person name="Ohara O."/>
            <person name="Okazaki Y."/>
            <person name="Orlando V."/>
            <person name="Pang K.C."/>
            <person name="Pavan W.J."/>
            <person name="Pavesi G."/>
            <person name="Pesole G."/>
            <person name="Petrovsky N."/>
            <person name="Piazza S."/>
            <person name="Reed J."/>
            <person name="Reid J.F."/>
            <person name="Ring B.Z."/>
            <person name="Ringwald M."/>
            <person name="Rost B."/>
            <person name="Ruan Y."/>
            <person name="Salzberg S.L."/>
            <person name="Sandelin A."/>
            <person name="Schneider C."/>
            <person name="Schoenbach C."/>
            <person name="Sekiguchi K."/>
            <person name="Semple C.A."/>
            <person name="Seno S."/>
            <person name="Sessa L."/>
            <person name="Sheng Y."/>
            <person name="Shibata Y."/>
            <person name="Shimada H."/>
            <person name="Shimada K."/>
            <person name="Silva D."/>
            <person name="Sinclair B."/>
            <person name="Sperling S."/>
            <person name="Stupka E."/>
            <person name="Sugiura K."/>
            <person name="Sultana R."/>
            <person name="Takenaka Y."/>
            <person name="Taki K."/>
            <person name="Tammoja K."/>
            <person name="Tan S.L."/>
            <person name="Tang S."/>
            <person name="Taylor M.S."/>
            <person name="Tegner J."/>
            <person name="Teichmann S.A."/>
            <person name="Ueda H.R."/>
            <person name="van Nimwegen E."/>
            <person name="Verardo R."/>
            <person name="Wei C.L."/>
            <person name="Yagi K."/>
            <person name="Yamanishi H."/>
            <person name="Zabarovsky E."/>
            <person name="Zhu S."/>
            <person name="Zimmer A."/>
            <person name="Hide W."/>
            <person name="Bult C."/>
            <person name="Grimmond S.M."/>
            <person name="Teasdale R.D."/>
            <person name="Liu E.T."/>
            <person name="Brusic V."/>
            <person name="Quackenbush J."/>
            <person name="Wahlestedt C."/>
            <person name="Mattick J.S."/>
            <person name="Hume D.A."/>
            <person name="Kai C."/>
            <person name="Sasaki D."/>
            <person name="Tomaru Y."/>
            <person name="Fukuda S."/>
            <person name="Kanamori-Katayama M."/>
            <person name="Suzuki M."/>
            <person name="Aoki J."/>
            <person name="Arakawa T."/>
            <person name="Iida J."/>
            <person name="Imamura K."/>
            <person name="Itoh M."/>
            <person name="Kato T."/>
            <person name="Kawaji H."/>
            <person name="Kawagashira N."/>
            <person name="Kawashima T."/>
            <person name="Kojima M."/>
            <person name="Kondo S."/>
            <person name="Konno H."/>
            <person name="Nakano K."/>
            <person name="Ninomiya N."/>
            <person name="Nishio T."/>
            <person name="Okada M."/>
            <person name="Plessy C."/>
            <person name="Shibata K."/>
            <person name="Shiraki T."/>
            <person name="Suzuki S."/>
            <person name="Tagami M."/>
            <person name="Waki K."/>
            <person name="Watahiki A."/>
            <person name="Okamura-Oho Y."/>
            <person name="Suzuki H."/>
            <person name="Kawai J."/>
            <person name="Hayashizaki Y."/>
        </authorList>
    </citation>
    <scope>NUCLEOTIDE SEQUENCE [LARGE SCALE MRNA] (ISOFORM 1)</scope>
    <source>
        <strain>C57BL/6J</strain>
        <tissue>Liver</tissue>
    </source>
</reference>
<reference key="2">
    <citation type="journal article" date="2004" name="Genome Res.">
        <title>The status, quality, and expansion of the NIH full-length cDNA project: the Mammalian Gene Collection (MGC).</title>
        <authorList>
            <consortium name="The MGC Project Team"/>
        </authorList>
    </citation>
    <scope>NUCLEOTIDE SEQUENCE [LARGE SCALE MRNA] (ISOFORM 2)</scope>
    <source>
        <strain>C57BL/6J</strain>
        <tissue>Brain</tissue>
    </source>
</reference>
<reference key="3">
    <citation type="journal article" date="2003" name="Cell Struct. Funct.">
        <title>Adaptor protein complexes as the key regulators of protein sorting in the post-Golgi network.</title>
        <authorList>
            <person name="Nakatsu F."/>
            <person name="Ohno H."/>
        </authorList>
    </citation>
    <scope>FUNCTION OF THE AP-2 COMPLEX IN CLATHRIN-MEDIATED ENDOCYTOSIS</scope>
</reference>
<reference key="4">
    <citation type="journal article" date="2004" name="Annu. Rev. Cell Dev. Biol.">
        <title>Adaptors for clathrin coats: structure and function.</title>
        <authorList>
            <person name="Owen D.J."/>
            <person name="Collins B.M."/>
            <person name="Evans P.R."/>
        </authorList>
    </citation>
    <scope>FUNCTION OF THE AP-2 COMPLEX IN CLATHRIN-MEDIATED ENDOCYTOSIS</scope>
</reference>
<reference key="5">
    <citation type="journal article" date="2010" name="Cell">
        <title>A tissue-specific atlas of mouse protein phosphorylation and expression.</title>
        <authorList>
            <person name="Huttlin E.L."/>
            <person name="Jedrychowski M.P."/>
            <person name="Elias J.E."/>
            <person name="Goswami T."/>
            <person name="Rad R."/>
            <person name="Beausoleil S.A."/>
            <person name="Villen J."/>
            <person name="Haas W."/>
            <person name="Sowa M.E."/>
            <person name="Gygi S.P."/>
        </authorList>
    </citation>
    <scope>IDENTIFICATION BY MASS SPECTROMETRY [LARGE SCALE ANALYSIS]</scope>
    <source>
        <tissue>Brain</tissue>
        <tissue>Brown adipose tissue</tissue>
        <tissue>Heart</tissue>
        <tissue>Kidney</tissue>
        <tissue>Liver</tissue>
        <tissue>Lung</tissue>
        <tissue>Pancreas</tissue>
        <tissue>Spleen</tissue>
        <tissue>Testis</tissue>
    </source>
</reference>
<reference key="6">
    <citation type="journal article" date="2013" name="J. Clin. Invest.">
        <title>Endocytosis of synaptic ADAM10 in neuronal plasticity and Alzheimer's disease.</title>
        <authorList>
            <person name="Marcello E."/>
            <person name="Saraceno C."/>
            <person name="Musardo S."/>
            <person name="Vara H."/>
            <person name="de la Fuente A.G."/>
            <person name="Pelucchi S."/>
            <person name="Di Marino D."/>
            <person name="Borroni B."/>
            <person name="Tramontano A."/>
            <person name="Perez-Otano I."/>
            <person name="Padovani A."/>
            <person name="Giustetto M."/>
            <person name="Gardoni F."/>
            <person name="Di Luca M."/>
        </authorList>
    </citation>
    <scope>FUNCTION</scope>
    <scope>INTERACTION WITH ADAM10</scope>
    <scope>TISSUE SPECIFICITY</scope>
</reference>
<reference key="7">
    <citation type="journal article" date="2017" name="Cell Rep.">
        <title>APache is an AP2-interacting protein involved in synaptic vesicle trafficking and neuronal development.</title>
        <authorList>
            <person name="Piccini A."/>
            <person name="Castroflorio E."/>
            <person name="Valente P."/>
            <person name="Guarnieri F.C."/>
            <person name="Aprile D."/>
            <person name="Michetti C."/>
            <person name="Bramini M."/>
            <person name="Giansante G."/>
            <person name="Pinto B."/>
            <person name="Savardi A."/>
            <person name="Cesca F."/>
            <person name="Bachi A."/>
            <person name="Cattaneo A."/>
            <person name="Wren J.D."/>
            <person name="Fassio A."/>
            <person name="Valtorta F."/>
            <person name="Benfenati F."/>
            <person name="Giovedi S."/>
        </authorList>
    </citation>
    <scope>INTERACTION WITH KIAA1107</scope>
</reference>
<evidence type="ECO:0000250" key="1"/>
<evidence type="ECO:0000250" key="2">
    <source>
        <dbReference type="UniProtKB" id="P62944"/>
    </source>
</evidence>
<evidence type="ECO:0000250" key="3">
    <source>
        <dbReference type="UniProtKB" id="P63010"/>
    </source>
</evidence>
<evidence type="ECO:0000256" key="4">
    <source>
        <dbReference type="SAM" id="MobiDB-lite"/>
    </source>
</evidence>
<evidence type="ECO:0000269" key="5">
    <source>
    </source>
</evidence>
<evidence type="ECO:0000269" key="6">
    <source>
    </source>
</evidence>
<evidence type="ECO:0000269" key="7">
    <source>
    </source>
</evidence>
<evidence type="ECO:0000269" key="8">
    <source>
    </source>
</evidence>
<evidence type="ECO:0000303" key="9">
    <source>
    </source>
</evidence>
<evidence type="ECO:0000305" key="10"/>
<evidence type="ECO:0007829" key="11">
    <source>
        <dbReference type="PDB" id="6OWO"/>
    </source>
</evidence>
<evidence type="ECO:0007829" key="12">
    <source>
        <dbReference type="PDB" id="6OXL"/>
    </source>
</evidence>
<evidence type="ECO:0007829" key="13">
    <source>
        <dbReference type="PDB" id="8T1O"/>
    </source>
</evidence>